<name>SYE_MOOTA</name>
<proteinExistence type="inferred from homology"/>
<protein>
    <recommendedName>
        <fullName evidence="1">Glutamate--tRNA ligase</fullName>
        <ecNumber evidence="1">6.1.1.17</ecNumber>
    </recommendedName>
    <alternativeName>
        <fullName evidence="1">Glutamyl-tRNA synthetase</fullName>
        <shortName evidence="1">GluRS</shortName>
    </alternativeName>
</protein>
<reference key="1">
    <citation type="journal article" date="2008" name="Environ. Microbiol.">
        <title>The complete genome sequence of Moorella thermoacetica (f. Clostridium thermoaceticum).</title>
        <authorList>
            <person name="Pierce E."/>
            <person name="Xie G."/>
            <person name="Barabote R.D."/>
            <person name="Saunders E."/>
            <person name="Han C.S."/>
            <person name="Detter J.C."/>
            <person name="Richardson P."/>
            <person name="Brettin T.S."/>
            <person name="Das A."/>
            <person name="Ljungdahl L.G."/>
            <person name="Ragsdale S.W."/>
        </authorList>
    </citation>
    <scope>NUCLEOTIDE SEQUENCE [LARGE SCALE GENOMIC DNA]</scope>
    <source>
        <strain>ATCC 39073 / JCM 9320</strain>
    </source>
</reference>
<keyword id="KW-0030">Aminoacyl-tRNA synthetase</keyword>
<keyword id="KW-0067">ATP-binding</keyword>
<keyword id="KW-0963">Cytoplasm</keyword>
<keyword id="KW-0436">Ligase</keyword>
<keyword id="KW-0547">Nucleotide-binding</keyword>
<keyword id="KW-0648">Protein biosynthesis</keyword>
<organism>
    <name type="scientific">Moorella thermoacetica (strain ATCC 39073 / JCM 9320)</name>
    <dbReference type="NCBI Taxonomy" id="264732"/>
    <lineage>
        <taxon>Bacteria</taxon>
        <taxon>Bacillati</taxon>
        <taxon>Bacillota</taxon>
        <taxon>Clostridia</taxon>
        <taxon>Moorellales</taxon>
        <taxon>Moorellaceae</taxon>
        <taxon>Moorella</taxon>
    </lineage>
</organism>
<sequence>MNKVRVRFAPSPTGSLHIGGARTALFNWLFARHHNGTFVLRIDDTDTERSTEASYKEILAAMGWLGLDWDEGPEKGGQFGPYLQSQRLELYRREAARLLNEGKAYLCYCTVEELAERRRQAQAEGRPPMYDRRCRYLTPADRTRLEQEGRQPVIRLAVPETGTTVVKDLIRGDVAFENATIDDFIIFKSNGMPTYNFATVIDDHLMQISHIIRAEEHLSNTPKQILVYQALAYELPAFAHVPMILAPDRSKLSKRHGATSVEEYRDEGYLPEAIINYLALLGWSPEGEEEIIPLEKIIEQFSLERVSKNAAIYDTKKLTWINGHYLREGNLDRITRLALPFLQAKGLLPDPLPEKDYNYVRSVIAAVRDRVKTLAEVADAASYFFTDVTNYEEKGIRKHFTRPGAAALLDEARERLATLPEFNAQAAEEAYRSLAEGKGISTGQLFHPTRLAISGRTMGPGLFEIMELLGRETVLARLDRAARWIRENLA</sequence>
<evidence type="ECO:0000255" key="1">
    <source>
        <dbReference type="HAMAP-Rule" id="MF_00022"/>
    </source>
</evidence>
<feature type="chain" id="PRO_0000237370" description="Glutamate--tRNA ligase">
    <location>
        <begin position="1"/>
        <end position="490"/>
    </location>
</feature>
<feature type="short sequence motif" description="'HIGH' region" evidence="1">
    <location>
        <begin position="10"/>
        <end position="20"/>
    </location>
</feature>
<feature type="short sequence motif" description="'KMSKS' region" evidence="1">
    <location>
        <begin position="251"/>
        <end position="255"/>
    </location>
</feature>
<feature type="binding site" evidence="1">
    <location>
        <position position="254"/>
    </location>
    <ligand>
        <name>ATP</name>
        <dbReference type="ChEBI" id="CHEBI:30616"/>
    </ligand>
</feature>
<gene>
    <name evidence="1" type="primary">gltX</name>
    <name type="ordered locus">Moth_1132</name>
</gene>
<accession>Q2RJE3</accession>
<comment type="function">
    <text evidence="1">Catalyzes the attachment of glutamate to tRNA(Glu) in a two-step reaction: glutamate is first activated by ATP to form Glu-AMP and then transferred to the acceptor end of tRNA(Glu).</text>
</comment>
<comment type="catalytic activity">
    <reaction evidence="1">
        <text>tRNA(Glu) + L-glutamate + ATP = L-glutamyl-tRNA(Glu) + AMP + diphosphate</text>
        <dbReference type="Rhea" id="RHEA:23540"/>
        <dbReference type="Rhea" id="RHEA-COMP:9663"/>
        <dbReference type="Rhea" id="RHEA-COMP:9680"/>
        <dbReference type="ChEBI" id="CHEBI:29985"/>
        <dbReference type="ChEBI" id="CHEBI:30616"/>
        <dbReference type="ChEBI" id="CHEBI:33019"/>
        <dbReference type="ChEBI" id="CHEBI:78442"/>
        <dbReference type="ChEBI" id="CHEBI:78520"/>
        <dbReference type="ChEBI" id="CHEBI:456215"/>
        <dbReference type="EC" id="6.1.1.17"/>
    </reaction>
</comment>
<comment type="subunit">
    <text evidence="1">Monomer.</text>
</comment>
<comment type="subcellular location">
    <subcellularLocation>
        <location evidence="1">Cytoplasm</location>
    </subcellularLocation>
</comment>
<comment type="similarity">
    <text evidence="1">Belongs to the class-I aminoacyl-tRNA synthetase family. Glutamate--tRNA ligase type 1 subfamily.</text>
</comment>
<dbReference type="EC" id="6.1.1.17" evidence="1"/>
<dbReference type="EMBL" id="CP000232">
    <property type="protein sequence ID" value="ABC19446.1"/>
    <property type="molecule type" value="Genomic_DNA"/>
</dbReference>
<dbReference type="RefSeq" id="YP_429989.1">
    <property type="nucleotide sequence ID" value="NC_007644.1"/>
</dbReference>
<dbReference type="SMR" id="Q2RJE3"/>
<dbReference type="STRING" id="264732.Moth_1132"/>
<dbReference type="EnsemblBacteria" id="ABC19446">
    <property type="protein sequence ID" value="ABC19446"/>
    <property type="gene ID" value="Moth_1132"/>
</dbReference>
<dbReference type="KEGG" id="mta:Moth_1132"/>
<dbReference type="PATRIC" id="fig|264732.11.peg.1214"/>
<dbReference type="eggNOG" id="COG0008">
    <property type="taxonomic scope" value="Bacteria"/>
</dbReference>
<dbReference type="HOGENOM" id="CLU_015768_6_3_9"/>
<dbReference type="OrthoDB" id="9807503at2"/>
<dbReference type="GO" id="GO:0005829">
    <property type="term" value="C:cytosol"/>
    <property type="evidence" value="ECO:0007669"/>
    <property type="project" value="TreeGrafter"/>
</dbReference>
<dbReference type="GO" id="GO:0005524">
    <property type="term" value="F:ATP binding"/>
    <property type="evidence" value="ECO:0007669"/>
    <property type="project" value="UniProtKB-UniRule"/>
</dbReference>
<dbReference type="GO" id="GO:0004818">
    <property type="term" value="F:glutamate-tRNA ligase activity"/>
    <property type="evidence" value="ECO:0007669"/>
    <property type="project" value="UniProtKB-UniRule"/>
</dbReference>
<dbReference type="GO" id="GO:0000049">
    <property type="term" value="F:tRNA binding"/>
    <property type="evidence" value="ECO:0007669"/>
    <property type="project" value="InterPro"/>
</dbReference>
<dbReference type="GO" id="GO:0008270">
    <property type="term" value="F:zinc ion binding"/>
    <property type="evidence" value="ECO:0007669"/>
    <property type="project" value="InterPro"/>
</dbReference>
<dbReference type="GO" id="GO:0006424">
    <property type="term" value="P:glutamyl-tRNA aminoacylation"/>
    <property type="evidence" value="ECO:0007669"/>
    <property type="project" value="UniProtKB-UniRule"/>
</dbReference>
<dbReference type="CDD" id="cd00808">
    <property type="entry name" value="GluRS_core"/>
    <property type="match status" value="1"/>
</dbReference>
<dbReference type="FunFam" id="3.40.50.620:FF:000045">
    <property type="entry name" value="Glutamate--tRNA ligase, mitochondrial"/>
    <property type="match status" value="1"/>
</dbReference>
<dbReference type="Gene3D" id="1.10.10.350">
    <property type="match status" value="1"/>
</dbReference>
<dbReference type="Gene3D" id="1.10.8.70">
    <property type="entry name" value="Glutamate-tRNA synthetase, class I, anticodon-binding domain 1"/>
    <property type="match status" value="1"/>
</dbReference>
<dbReference type="Gene3D" id="3.40.50.620">
    <property type="entry name" value="HUPs"/>
    <property type="match status" value="1"/>
</dbReference>
<dbReference type="HAMAP" id="MF_00022">
    <property type="entry name" value="Glu_tRNA_synth_type1"/>
    <property type="match status" value="1"/>
</dbReference>
<dbReference type="InterPro" id="IPR045462">
    <property type="entry name" value="aa-tRNA-synth_I_cd-bd"/>
</dbReference>
<dbReference type="InterPro" id="IPR020751">
    <property type="entry name" value="aa-tRNA-synth_I_codon-bd_sub2"/>
</dbReference>
<dbReference type="InterPro" id="IPR001412">
    <property type="entry name" value="aa-tRNA-synth_I_CS"/>
</dbReference>
<dbReference type="InterPro" id="IPR008925">
    <property type="entry name" value="aa_tRNA-synth_I_cd-bd_sf"/>
</dbReference>
<dbReference type="InterPro" id="IPR004527">
    <property type="entry name" value="Glu-tRNA-ligase_bac/mito"/>
</dbReference>
<dbReference type="InterPro" id="IPR020752">
    <property type="entry name" value="Glu-tRNA-synth_I_codon-bd_sub1"/>
</dbReference>
<dbReference type="InterPro" id="IPR000924">
    <property type="entry name" value="Glu/Gln-tRNA-synth"/>
</dbReference>
<dbReference type="InterPro" id="IPR020058">
    <property type="entry name" value="Glu/Gln-tRNA-synth_Ib_cat-dom"/>
</dbReference>
<dbReference type="InterPro" id="IPR049940">
    <property type="entry name" value="GluQ/Sye"/>
</dbReference>
<dbReference type="InterPro" id="IPR033910">
    <property type="entry name" value="GluRS_core"/>
</dbReference>
<dbReference type="InterPro" id="IPR014729">
    <property type="entry name" value="Rossmann-like_a/b/a_fold"/>
</dbReference>
<dbReference type="NCBIfam" id="TIGR00464">
    <property type="entry name" value="gltX_bact"/>
    <property type="match status" value="1"/>
</dbReference>
<dbReference type="PANTHER" id="PTHR43311">
    <property type="entry name" value="GLUTAMATE--TRNA LIGASE"/>
    <property type="match status" value="1"/>
</dbReference>
<dbReference type="PANTHER" id="PTHR43311:SF2">
    <property type="entry name" value="GLUTAMATE--TRNA LIGASE, MITOCHONDRIAL-RELATED"/>
    <property type="match status" value="1"/>
</dbReference>
<dbReference type="Pfam" id="PF19269">
    <property type="entry name" value="Anticodon_2"/>
    <property type="match status" value="1"/>
</dbReference>
<dbReference type="Pfam" id="PF00749">
    <property type="entry name" value="tRNA-synt_1c"/>
    <property type="match status" value="1"/>
</dbReference>
<dbReference type="PRINTS" id="PR00987">
    <property type="entry name" value="TRNASYNTHGLU"/>
</dbReference>
<dbReference type="SUPFAM" id="SSF48163">
    <property type="entry name" value="An anticodon-binding domain of class I aminoacyl-tRNA synthetases"/>
    <property type="match status" value="1"/>
</dbReference>
<dbReference type="SUPFAM" id="SSF52374">
    <property type="entry name" value="Nucleotidylyl transferase"/>
    <property type="match status" value="1"/>
</dbReference>
<dbReference type="PROSITE" id="PS00178">
    <property type="entry name" value="AA_TRNA_LIGASE_I"/>
    <property type="match status" value="1"/>
</dbReference>